<protein>
    <recommendedName>
        <fullName evidence="6">Pancreatic triacylglycerol lipase</fullName>
        <shortName>PL</shortName>
        <shortName>PTL</shortName>
        <shortName>Pancreatic lipase</shortName>
        <ecNumber evidence="2">3.1.1.3</ecNumber>
    </recommendedName>
</protein>
<reference key="1">
    <citation type="journal article" date="1995" name="Eur. J. Biochem.">
        <title>Cloning and expression in insect cells of two pancreatic lipases and a procolipase from Myocastor coypus.</title>
        <authorList>
            <person name="Thirstrup K."/>
            <person name="Carriere F."/>
            <person name="Hjorth S.A."/>
            <person name="Rasmussen P.B."/>
            <person name="Nielsen P.F."/>
            <person name="Ladefoged C."/>
            <person name="Thim L."/>
            <person name="Boel E."/>
        </authorList>
    </citation>
    <scope>NUCLEOTIDE SEQUENCE [MRNA]</scope>
    <source>
        <tissue>Pancreas</tissue>
    </source>
</reference>
<accession>Q64425</accession>
<sequence>LLLGAVAGSEVCYDRLGCFSDDSPWAGIVERPLKVLPWSPSTINTRFLLYTNESPNNYQIVTADSSTIRSSNFRTDRKTRFIIHGYIDKGEENWLANMCEALLQVESVNCICVDWKGGSRALYTQATQNIRVVGAEVAYFVDALQSQLGYSPSNVHIIGHSLGSHVAGEAGRRTNGNIGRITGLDPAEPCFQGTPELVRLDPSDAQFVDVIHTDGAPIIPNLGFGMSQTVGHLDFFPNGGVEMPGCQKNIISQIVDINGIWEGTRDFAACNHLRSYKYYIDSILNPTGFAGFSCSSYNTFSSNNCFPCASGGCPQMGHYADRFSGKTNELFQQFYLNTGDASNFSRWRYQIAVTLSGRKVTGHVLVSLYGSGGTSKQYEIYKGSLQPGTSYVNQIDSDVDVGDIEKVKFIWYNNIINPTLPKVGASSIQVTRNDGRVFNFCSQDTVREDILLTLTPC</sequence>
<keyword id="KW-0106">Calcium</keyword>
<keyword id="KW-1015">Disulfide bond</keyword>
<keyword id="KW-0325">Glycoprotein</keyword>
<keyword id="KW-0378">Hydrolase</keyword>
<keyword id="KW-0442">Lipid degradation</keyword>
<keyword id="KW-0443">Lipid metabolism</keyword>
<keyword id="KW-0479">Metal-binding</keyword>
<keyword id="KW-0964">Secreted</keyword>
<keyword id="KW-0732">Signal</keyword>
<proteinExistence type="evidence at transcript level"/>
<organism>
    <name type="scientific">Myocastor coypus</name>
    <name type="common">Coypu</name>
    <name type="synonym">Mus coypus</name>
    <dbReference type="NCBI Taxonomy" id="10157"/>
    <lineage>
        <taxon>Eukaryota</taxon>
        <taxon>Metazoa</taxon>
        <taxon>Chordata</taxon>
        <taxon>Craniata</taxon>
        <taxon>Vertebrata</taxon>
        <taxon>Euteleostomi</taxon>
        <taxon>Mammalia</taxon>
        <taxon>Eutheria</taxon>
        <taxon>Euarchontoglires</taxon>
        <taxon>Glires</taxon>
        <taxon>Rodentia</taxon>
        <taxon>Hystricomorpha</taxon>
        <taxon>Myocastoridae</taxon>
        <taxon>Myocastor</taxon>
    </lineage>
</organism>
<dbReference type="EC" id="3.1.1.3" evidence="2"/>
<dbReference type="EMBL" id="X82999">
    <property type="protein sequence ID" value="CAA58120.1"/>
    <property type="molecule type" value="mRNA"/>
</dbReference>
<dbReference type="PIR" id="I48206">
    <property type="entry name" value="I48206"/>
</dbReference>
<dbReference type="SMR" id="Q64425"/>
<dbReference type="ESTHER" id="myoco-1plip">
    <property type="family name" value="Pancreatic_lipase"/>
</dbReference>
<dbReference type="GlyCosmos" id="Q64425">
    <property type="glycosylation" value="1 site, No reported glycans"/>
</dbReference>
<dbReference type="GO" id="GO:0005615">
    <property type="term" value="C:extracellular space"/>
    <property type="evidence" value="ECO:0007669"/>
    <property type="project" value="TreeGrafter"/>
</dbReference>
<dbReference type="GO" id="GO:0047376">
    <property type="term" value="F:all-trans-retinyl-palmitate hydrolase, all-trans-retinol forming activity"/>
    <property type="evidence" value="ECO:0007669"/>
    <property type="project" value="RHEA"/>
</dbReference>
<dbReference type="GO" id="GO:0004465">
    <property type="term" value="F:lipoprotein lipase activity"/>
    <property type="evidence" value="ECO:0007669"/>
    <property type="project" value="TreeGrafter"/>
</dbReference>
<dbReference type="GO" id="GO:0046872">
    <property type="term" value="F:metal ion binding"/>
    <property type="evidence" value="ECO:0007669"/>
    <property type="project" value="UniProtKB-KW"/>
</dbReference>
<dbReference type="GO" id="GO:0004806">
    <property type="term" value="F:triacylglycerol lipase activity"/>
    <property type="evidence" value="ECO:0000250"/>
    <property type="project" value="UniProtKB"/>
</dbReference>
<dbReference type="GO" id="GO:0016042">
    <property type="term" value="P:lipid catabolic process"/>
    <property type="evidence" value="ECO:0007669"/>
    <property type="project" value="UniProtKB-KW"/>
</dbReference>
<dbReference type="CDD" id="cd00707">
    <property type="entry name" value="Pancreat_lipase_like"/>
    <property type="match status" value="1"/>
</dbReference>
<dbReference type="CDD" id="cd01759">
    <property type="entry name" value="PLAT_PL"/>
    <property type="match status" value="1"/>
</dbReference>
<dbReference type="FunFam" id="3.40.50.1820:FF:000033">
    <property type="entry name" value="Pancreatic triacylglycerol lipase"/>
    <property type="match status" value="1"/>
</dbReference>
<dbReference type="FunFam" id="2.60.60.20:FF:000003">
    <property type="entry name" value="Triacylglycerol lipase"/>
    <property type="match status" value="1"/>
</dbReference>
<dbReference type="Gene3D" id="3.40.50.1820">
    <property type="entry name" value="alpha/beta hydrolase"/>
    <property type="match status" value="1"/>
</dbReference>
<dbReference type="Gene3D" id="2.60.60.20">
    <property type="entry name" value="PLAT/LH2 domain"/>
    <property type="match status" value="1"/>
</dbReference>
<dbReference type="InterPro" id="IPR029058">
    <property type="entry name" value="AB_hydrolase_fold"/>
</dbReference>
<dbReference type="InterPro" id="IPR013818">
    <property type="entry name" value="Lipase"/>
</dbReference>
<dbReference type="InterPro" id="IPR016272">
    <property type="entry name" value="Lipase_LIPH"/>
</dbReference>
<dbReference type="InterPro" id="IPR033906">
    <property type="entry name" value="Lipase_N"/>
</dbReference>
<dbReference type="InterPro" id="IPR002331">
    <property type="entry name" value="Lipase_panc"/>
</dbReference>
<dbReference type="InterPro" id="IPR001024">
    <property type="entry name" value="PLAT/LH2_dom"/>
</dbReference>
<dbReference type="InterPro" id="IPR036392">
    <property type="entry name" value="PLAT/LH2_dom_sf"/>
</dbReference>
<dbReference type="InterPro" id="IPR000734">
    <property type="entry name" value="TAG_lipase"/>
</dbReference>
<dbReference type="PANTHER" id="PTHR11610">
    <property type="entry name" value="LIPASE"/>
    <property type="match status" value="1"/>
</dbReference>
<dbReference type="PANTHER" id="PTHR11610:SF147">
    <property type="entry name" value="PANCREATIC TRIACYLGLYCEROL LIPASE"/>
    <property type="match status" value="1"/>
</dbReference>
<dbReference type="Pfam" id="PF00151">
    <property type="entry name" value="Lipase"/>
    <property type="match status" value="1"/>
</dbReference>
<dbReference type="Pfam" id="PF01477">
    <property type="entry name" value="PLAT"/>
    <property type="match status" value="1"/>
</dbReference>
<dbReference type="PIRSF" id="PIRSF000865">
    <property type="entry name" value="Lipoprotein_lipase_LIPH"/>
    <property type="match status" value="1"/>
</dbReference>
<dbReference type="PRINTS" id="PR00823">
    <property type="entry name" value="PANCLIPASE"/>
</dbReference>
<dbReference type="PRINTS" id="PR00821">
    <property type="entry name" value="TAGLIPASE"/>
</dbReference>
<dbReference type="SMART" id="SM00308">
    <property type="entry name" value="LH2"/>
    <property type="match status" value="1"/>
</dbReference>
<dbReference type="SUPFAM" id="SSF53474">
    <property type="entry name" value="alpha/beta-Hydrolases"/>
    <property type="match status" value="1"/>
</dbReference>
<dbReference type="SUPFAM" id="SSF49723">
    <property type="entry name" value="Lipase/lipooxygenase domain (PLAT/LH2 domain)"/>
    <property type="match status" value="1"/>
</dbReference>
<dbReference type="PROSITE" id="PS00120">
    <property type="entry name" value="LIPASE_SER"/>
    <property type="match status" value="1"/>
</dbReference>
<dbReference type="PROSITE" id="PS50095">
    <property type="entry name" value="PLAT"/>
    <property type="match status" value="1"/>
</dbReference>
<gene>
    <name type="primary">PNLIP</name>
</gene>
<comment type="function">
    <text evidence="2">Plays an important role in fat metabolism. It preferentially splits the esters of long-chain fatty acids at positions 1 and 3, producing mainly 2-monoacylglycerol and free fatty acids, and shows considerably higher activity against insoluble emulsified substrates than against soluble ones.</text>
</comment>
<comment type="catalytic activity">
    <reaction evidence="2">
        <text>a triacylglycerol + H2O = a diacylglycerol + a fatty acid + H(+)</text>
        <dbReference type="Rhea" id="RHEA:12044"/>
        <dbReference type="ChEBI" id="CHEBI:15377"/>
        <dbReference type="ChEBI" id="CHEBI:15378"/>
        <dbReference type="ChEBI" id="CHEBI:17855"/>
        <dbReference type="ChEBI" id="CHEBI:18035"/>
        <dbReference type="ChEBI" id="CHEBI:28868"/>
        <dbReference type="EC" id="3.1.1.3"/>
    </reaction>
    <physiologicalReaction direction="left-to-right" evidence="2">
        <dbReference type="Rhea" id="RHEA:12045"/>
    </physiologicalReaction>
</comment>
<comment type="catalytic activity">
    <reaction evidence="2">
        <text>1,2,3-tributanoylglycerol + H2O = dibutanoylglycerol + butanoate + H(+)</text>
        <dbReference type="Rhea" id="RHEA:40475"/>
        <dbReference type="ChEBI" id="CHEBI:15377"/>
        <dbReference type="ChEBI" id="CHEBI:15378"/>
        <dbReference type="ChEBI" id="CHEBI:17968"/>
        <dbReference type="ChEBI" id="CHEBI:35020"/>
        <dbReference type="ChEBI" id="CHEBI:76478"/>
    </reaction>
    <physiologicalReaction direction="left-to-right" evidence="2">
        <dbReference type="Rhea" id="RHEA:40476"/>
    </physiologicalReaction>
</comment>
<comment type="catalytic activity">
    <reaction evidence="2">
        <text>1,2,3-tri-(9Z-octadecenoyl)-glycerol + H2O = di-(9Z)-octadecenoylglycerol + (9Z)-octadecenoate + H(+)</text>
        <dbReference type="Rhea" id="RHEA:38575"/>
        <dbReference type="ChEBI" id="CHEBI:15377"/>
        <dbReference type="ChEBI" id="CHEBI:15378"/>
        <dbReference type="ChEBI" id="CHEBI:30823"/>
        <dbReference type="ChEBI" id="CHEBI:53753"/>
        <dbReference type="ChEBI" id="CHEBI:75945"/>
    </reaction>
    <physiologicalReaction direction="left-to-right" evidence="2">
        <dbReference type="Rhea" id="RHEA:38576"/>
    </physiologicalReaction>
</comment>
<comment type="catalytic activity">
    <reaction evidence="2">
        <text>all-trans-retinyl hexadecanoate + H2O = all-trans-retinol + hexadecanoate + H(+)</text>
        <dbReference type="Rhea" id="RHEA:13933"/>
        <dbReference type="ChEBI" id="CHEBI:7896"/>
        <dbReference type="ChEBI" id="CHEBI:15377"/>
        <dbReference type="ChEBI" id="CHEBI:15378"/>
        <dbReference type="ChEBI" id="CHEBI:17336"/>
        <dbReference type="ChEBI" id="CHEBI:17616"/>
    </reaction>
    <physiologicalReaction direction="left-to-right" evidence="2">
        <dbReference type="Rhea" id="RHEA:13934"/>
    </physiologicalReaction>
</comment>
<comment type="catalytic activity">
    <reaction evidence="2">
        <text>1,2-di-(9Z-octadecenoyl)-glycerol + H2O = (9Z-octadecenoyl)-glycerol + (9Z)-octadecenoate + H(+)</text>
        <dbReference type="Rhea" id="RHEA:38455"/>
        <dbReference type="ChEBI" id="CHEBI:15377"/>
        <dbReference type="ChEBI" id="CHEBI:15378"/>
        <dbReference type="ChEBI" id="CHEBI:30823"/>
        <dbReference type="ChEBI" id="CHEBI:52323"/>
        <dbReference type="ChEBI" id="CHEBI:75937"/>
    </reaction>
    <physiologicalReaction direction="left-to-right" evidence="2">
        <dbReference type="Rhea" id="RHEA:38456"/>
    </physiologicalReaction>
</comment>
<comment type="activity regulation">
    <text evidence="2">Inhibited by bile salts, is reactivated by (pro)colipase/CLPS.</text>
</comment>
<comment type="subunit">
    <text evidence="2">Forms a 1:1 stoichiometric complex with (pro)colipase/CLPS.</text>
</comment>
<comment type="subcellular location">
    <subcellularLocation>
        <location evidence="2">Secreted</location>
    </subcellularLocation>
</comment>
<comment type="similarity">
    <text evidence="6">Belongs to the AB hydrolase superfamily. Lipase family.</text>
</comment>
<feature type="signal peptide" evidence="3">
    <location>
        <begin position="1" status="less than"/>
        <end position="7"/>
    </location>
</feature>
<feature type="chain" id="PRO_0000017786" description="Pancreatic triacylglycerol lipase">
    <location>
        <begin position="8"/>
        <end position="457"/>
    </location>
</feature>
<feature type="domain" description="PLAT" evidence="4">
    <location>
        <begin position="347"/>
        <end position="457"/>
    </location>
</feature>
<feature type="active site" description="Nucleophile" evidence="1">
    <location>
        <position position="161"/>
    </location>
</feature>
<feature type="active site" description="Charge relay system" evidence="5">
    <location>
        <position position="185"/>
    </location>
</feature>
<feature type="active site" description="Charge relay system" evidence="5">
    <location>
        <position position="272"/>
    </location>
</feature>
<feature type="binding site" evidence="1">
    <location>
        <position position="196"/>
    </location>
    <ligand>
        <name>Ca(2+)</name>
        <dbReference type="ChEBI" id="CHEBI:29108"/>
    </ligand>
</feature>
<feature type="binding site" evidence="1">
    <location>
        <position position="199"/>
    </location>
    <ligand>
        <name>Ca(2+)</name>
        <dbReference type="ChEBI" id="CHEBI:29108"/>
    </ligand>
</feature>
<feature type="binding site" evidence="1">
    <location>
        <position position="201"/>
    </location>
    <ligand>
        <name>Ca(2+)</name>
        <dbReference type="ChEBI" id="CHEBI:29108"/>
    </ligand>
</feature>
<feature type="binding site" evidence="1">
    <location>
        <position position="204"/>
    </location>
    <ligand>
        <name>Ca(2+)</name>
        <dbReference type="ChEBI" id="CHEBI:29108"/>
    </ligand>
</feature>
<feature type="glycosylation site" description="N-linked (GlcNAc...) asparagine" evidence="3">
    <location>
        <position position="343"/>
    </location>
</feature>
<feature type="disulfide bond" evidence="4">
    <location>
        <begin position="12"/>
        <end position="18"/>
    </location>
</feature>
<feature type="disulfide bond" evidence="4">
    <location>
        <begin position="99"/>
        <end position="110"/>
    </location>
</feature>
<feature type="disulfide bond" evidence="4">
    <location>
        <begin position="246"/>
        <end position="270"/>
    </location>
</feature>
<feature type="disulfide bond" evidence="4">
    <location>
        <begin position="294"/>
        <end position="305"/>
    </location>
</feature>
<feature type="disulfide bond" evidence="4">
    <location>
        <begin position="308"/>
        <end position="313"/>
    </location>
</feature>
<feature type="disulfide bond" evidence="4">
    <location>
        <begin position="441"/>
        <end position="457"/>
    </location>
</feature>
<feature type="non-terminal residue">
    <location>
        <position position="1"/>
    </location>
</feature>
<name>LIPP_MYOCO</name>
<evidence type="ECO:0000250" key="1"/>
<evidence type="ECO:0000250" key="2">
    <source>
        <dbReference type="UniProtKB" id="P16233"/>
    </source>
</evidence>
<evidence type="ECO:0000255" key="3"/>
<evidence type="ECO:0000255" key="4">
    <source>
        <dbReference type="PROSITE-ProRule" id="PRU00152"/>
    </source>
</evidence>
<evidence type="ECO:0000255" key="5">
    <source>
        <dbReference type="PROSITE-ProRule" id="PRU10037"/>
    </source>
</evidence>
<evidence type="ECO:0000305" key="6"/>